<accession>Q8R0S9</accession>
<protein>
    <recommendedName>
        <fullName evidence="9">Solute carrier family 22 member 22</fullName>
    </recommendedName>
    <alternativeName>
        <fullName evidence="3">Prostaglandin-specific organic anion transporter</fullName>
    </alternativeName>
</protein>
<evidence type="ECO:0000255" key="1"/>
<evidence type="ECO:0000269" key="2">
    <source>
    </source>
</evidence>
<evidence type="ECO:0000303" key="3">
    <source>
    </source>
</evidence>
<evidence type="ECO:0000305" key="4"/>
<evidence type="ECO:0000312" key="5">
    <source>
        <dbReference type="EMBL" id="AAH26439.1"/>
    </source>
</evidence>
<evidence type="ECO:0000312" key="6">
    <source>
        <dbReference type="EMBL" id="BAC26852.1"/>
    </source>
</evidence>
<evidence type="ECO:0000312" key="7">
    <source>
        <dbReference type="EMBL" id="BAJ11740.1"/>
    </source>
</evidence>
<evidence type="ECO:0000312" key="8">
    <source>
        <dbReference type="EMBL" id="EDL29281.1"/>
    </source>
</evidence>
<evidence type="ECO:0000312" key="9">
    <source>
        <dbReference type="MGI" id="MGI:2446114"/>
    </source>
</evidence>
<evidence type="ECO:0000312" key="10">
    <source>
        <dbReference type="Proteomes" id="UP000000589"/>
    </source>
</evidence>
<sequence length="554" mass="62424">MDFDEILHHVGDSGRFQICMIILLNILSLVLSPHDVLENFTAAIPAHHCSINLDNSRSEVSTDMNLTTEDLMKVSIPMGPNQKPEQCRRFRYTQWQFLDSNISTFNSTELETEPCLDGWTYDHSVFTSTIVTEWDLVCDFQSFKYYAQATSLAGHLVSCPLSGIISDRFGRKPLLMYCSLAYGAVGTYCAFAPNFSVYCVLRFLLSAFQSTILINSLILVLEEASVQWHPTIIVLSGLFNSIGQGVLGGLAYVISDWHLLQLAYALPFFIFFVLFCWVPESVRWLIITGKTDQAWKELQRIASINGKKGIAQNLTTEDLRSKLKKDVNSTGKLFRIKDIFINPLIRKIVLSNSSLLFAELFSFVGLLLDVQLLGKNMFLTQIFLGAIDVPSKSLTYFTIRNVSRRPLIAFLLLTTGSCITITIFISEEMYVLRTIIFILGKGCFAAFTCISTTYINELSPVELRSTLNGVFLAVVRLAGVLSALTLATRKYFVYLPMILYGVLPIVATISILFLPETFNLPHTDIIKDMEKRKRLMSKNISKKEGQDFLETTEC</sequence>
<dbReference type="EMBL" id="AB520670">
    <property type="protein sequence ID" value="BAJ11740.1"/>
    <property type="molecule type" value="mRNA"/>
</dbReference>
<dbReference type="EMBL" id="AK030222">
    <property type="protein sequence ID" value="BAC26852.1"/>
    <property type="molecule type" value="mRNA"/>
</dbReference>
<dbReference type="EMBL" id="AC123692">
    <property type="status" value="NOT_ANNOTATED_CDS"/>
    <property type="molecule type" value="Genomic_DNA"/>
</dbReference>
<dbReference type="EMBL" id="AC124678">
    <property type="status" value="NOT_ANNOTATED_CDS"/>
    <property type="molecule type" value="Genomic_DNA"/>
</dbReference>
<dbReference type="EMBL" id="AC161480">
    <property type="status" value="NOT_ANNOTATED_CDS"/>
    <property type="molecule type" value="Genomic_DNA"/>
</dbReference>
<dbReference type="EMBL" id="CH466545">
    <property type="protein sequence ID" value="EDL29281.1"/>
    <property type="molecule type" value="Genomic_DNA"/>
</dbReference>
<dbReference type="EMBL" id="BC026439">
    <property type="protein sequence ID" value="AAH26439.1"/>
    <property type="molecule type" value="mRNA"/>
</dbReference>
<dbReference type="CCDS" id="CCDS27481.1"/>
<dbReference type="RefSeq" id="NP_001344859.1">
    <property type="nucleotide sequence ID" value="NM_001357930.1"/>
</dbReference>
<dbReference type="RefSeq" id="NP_759010.1">
    <property type="nucleotide sequence ID" value="NM_172378.3"/>
</dbReference>
<dbReference type="RefSeq" id="XP_006520759.1">
    <property type="nucleotide sequence ID" value="XM_006520696.1"/>
</dbReference>
<dbReference type="SMR" id="Q8R0S9"/>
<dbReference type="FunCoup" id="Q8R0S9">
    <property type="interactions" value="14"/>
</dbReference>
<dbReference type="STRING" id="10090.ENSMUSP00000105825"/>
<dbReference type="TCDB" id="2.A.1.19.20">
    <property type="family name" value="the major facilitator superfamily (mfs)"/>
</dbReference>
<dbReference type="GlyCosmos" id="Q8R0S9">
    <property type="glycosylation" value="2 sites, No reported glycans"/>
</dbReference>
<dbReference type="GlyGen" id="Q8R0S9">
    <property type="glycosylation" value="2 sites"/>
</dbReference>
<dbReference type="iPTMnet" id="Q8R0S9"/>
<dbReference type="PhosphoSitePlus" id="Q8R0S9"/>
<dbReference type="jPOST" id="Q8R0S9"/>
<dbReference type="PaxDb" id="10090-ENSMUSP00000022995"/>
<dbReference type="ProteomicsDB" id="253362"/>
<dbReference type="DNASU" id="210463"/>
<dbReference type="Ensembl" id="ENSMUST00000022995.13">
    <property type="protein sequence ID" value="ENSMUSP00000022995.7"/>
    <property type="gene ID" value="ENSMUSG00000022366.13"/>
</dbReference>
<dbReference type="Ensembl" id="ENSMUST00000110196.8">
    <property type="protein sequence ID" value="ENSMUSP00000105825.2"/>
    <property type="gene ID" value="ENSMUSG00000022366.13"/>
</dbReference>
<dbReference type="GeneID" id="210463"/>
<dbReference type="KEGG" id="mmu:210463"/>
<dbReference type="UCSC" id="uc007vsn.1">
    <property type="organism name" value="mouse"/>
</dbReference>
<dbReference type="AGR" id="MGI:2446114"/>
<dbReference type="CTD" id="210463"/>
<dbReference type="MGI" id="MGI:2446114">
    <property type="gene designation" value="Slc22a22"/>
</dbReference>
<dbReference type="VEuPathDB" id="HostDB:ENSMUSG00000022366"/>
<dbReference type="eggNOG" id="KOG0255">
    <property type="taxonomic scope" value="Eukaryota"/>
</dbReference>
<dbReference type="GeneTree" id="ENSGT00940000157004"/>
<dbReference type="HOGENOM" id="CLU_001265_33_3_1"/>
<dbReference type="InParanoid" id="Q8R0S9"/>
<dbReference type="OMA" id="CHRFRQT"/>
<dbReference type="OrthoDB" id="2544694at2759"/>
<dbReference type="PhylomeDB" id="Q8R0S9"/>
<dbReference type="TreeFam" id="TF315847"/>
<dbReference type="BioGRID-ORCS" id="210463">
    <property type="hits" value="2 hits in 76 CRISPR screens"/>
</dbReference>
<dbReference type="ChiTaRS" id="Slc22a22">
    <property type="organism name" value="mouse"/>
</dbReference>
<dbReference type="PRO" id="PR:Q8R0S9"/>
<dbReference type="Proteomes" id="UP000000589">
    <property type="component" value="Chromosome 15"/>
</dbReference>
<dbReference type="RNAct" id="Q8R0S9">
    <property type="molecule type" value="protein"/>
</dbReference>
<dbReference type="Bgee" id="ENSMUSG00000022366">
    <property type="expression patterns" value="Expressed in right kidney and 9 other cell types or tissues"/>
</dbReference>
<dbReference type="ExpressionAtlas" id="Q8R0S9">
    <property type="expression patterns" value="baseline and differential"/>
</dbReference>
<dbReference type="GO" id="GO:0016323">
    <property type="term" value="C:basolateral plasma membrane"/>
    <property type="evidence" value="ECO:0000314"/>
    <property type="project" value="MGI"/>
</dbReference>
<dbReference type="GO" id="GO:0004955">
    <property type="term" value="F:prostaglandin receptor activity"/>
    <property type="evidence" value="ECO:0000314"/>
    <property type="project" value="MGI"/>
</dbReference>
<dbReference type="GO" id="GO:0022857">
    <property type="term" value="F:transmembrane transporter activity"/>
    <property type="evidence" value="ECO:0007669"/>
    <property type="project" value="InterPro"/>
</dbReference>
<dbReference type="GO" id="GO:0006811">
    <property type="term" value="P:monoatomic ion transport"/>
    <property type="evidence" value="ECO:0007669"/>
    <property type="project" value="UniProtKB-KW"/>
</dbReference>
<dbReference type="GO" id="GO:0071720">
    <property type="term" value="P:sodium-independent prostaglandin transport"/>
    <property type="evidence" value="ECO:0000314"/>
    <property type="project" value="MGI"/>
</dbReference>
<dbReference type="CDD" id="cd17374">
    <property type="entry name" value="MFS_OAT"/>
    <property type="match status" value="1"/>
</dbReference>
<dbReference type="Gene3D" id="1.20.1250.20">
    <property type="entry name" value="MFS general substrate transporter like domains"/>
    <property type="match status" value="1"/>
</dbReference>
<dbReference type="InterPro" id="IPR011701">
    <property type="entry name" value="MFS"/>
</dbReference>
<dbReference type="InterPro" id="IPR020846">
    <property type="entry name" value="MFS_dom"/>
</dbReference>
<dbReference type="InterPro" id="IPR036259">
    <property type="entry name" value="MFS_trans_sf"/>
</dbReference>
<dbReference type="InterPro" id="IPR005829">
    <property type="entry name" value="Sugar_transporter_CS"/>
</dbReference>
<dbReference type="PANTHER" id="PTHR24064">
    <property type="entry name" value="SOLUTE CARRIER FAMILY 22 MEMBER"/>
    <property type="match status" value="1"/>
</dbReference>
<dbReference type="Pfam" id="PF07690">
    <property type="entry name" value="MFS_1"/>
    <property type="match status" value="1"/>
</dbReference>
<dbReference type="SUPFAM" id="SSF103473">
    <property type="entry name" value="MFS general substrate transporter"/>
    <property type="match status" value="1"/>
</dbReference>
<dbReference type="PROSITE" id="PS50850">
    <property type="entry name" value="MFS"/>
    <property type="match status" value="1"/>
</dbReference>
<dbReference type="PROSITE" id="PS00216">
    <property type="entry name" value="SUGAR_TRANSPORT_1"/>
    <property type="match status" value="1"/>
</dbReference>
<organism evidence="10">
    <name type="scientific">Mus musculus</name>
    <name type="common">Mouse</name>
    <dbReference type="NCBI Taxonomy" id="10090"/>
    <lineage>
        <taxon>Eukaryota</taxon>
        <taxon>Metazoa</taxon>
        <taxon>Chordata</taxon>
        <taxon>Craniata</taxon>
        <taxon>Vertebrata</taxon>
        <taxon>Euteleostomi</taxon>
        <taxon>Mammalia</taxon>
        <taxon>Eutheria</taxon>
        <taxon>Euarchontoglires</taxon>
        <taxon>Glires</taxon>
        <taxon>Rodentia</taxon>
        <taxon>Myomorpha</taxon>
        <taxon>Muroidea</taxon>
        <taxon>Muridae</taxon>
        <taxon>Murinae</taxon>
        <taxon>Mus</taxon>
        <taxon>Mus</taxon>
    </lineage>
</organism>
<keyword id="KW-1003">Cell membrane</keyword>
<keyword id="KW-0325">Glycoprotein</keyword>
<keyword id="KW-0406">Ion transport</keyword>
<keyword id="KW-0472">Membrane</keyword>
<keyword id="KW-1185">Reference proteome</keyword>
<keyword id="KW-0812">Transmembrane</keyword>
<keyword id="KW-1133">Transmembrane helix</keyword>
<keyword id="KW-0813">Transport</keyword>
<gene>
    <name evidence="9" type="primary">Slc22a22</name>
    <name evidence="3" type="synonym">Oat-pg</name>
</gene>
<feature type="chain" id="PRO_0000440989" description="Solute carrier family 22 member 22">
    <location>
        <begin position="1"/>
        <end position="554"/>
    </location>
</feature>
<feature type="topological domain" description="Cytoplasmic" evidence="4">
    <location>
        <begin position="1"/>
        <end position="15"/>
    </location>
</feature>
<feature type="transmembrane region" description="Helical; Name=1" evidence="1">
    <location>
        <begin position="16"/>
        <end position="36"/>
    </location>
</feature>
<feature type="topological domain" description="Extracellular" evidence="4">
    <location>
        <begin position="37"/>
        <end position="144"/>
    </location>
</feature>
<feature type="transmembrane region" description="Helical; Name=2" evidence="1">
    <location>
        <begin position="145"/>
        <end position="165"/>
    </location>
</feature>
<feature type="topological domain" description="Cytoplasmic" evidence="4">
    <location>
        <begin position="166"/>
        <end position="172"/>
    </location>
</feature>
<feature type="transmembrane region" description="Helical; Name=3" evidence="1">
    <location>
        <begin position="173"/>
        <end position="193"/>
    </location>
</feature>
<feature type="topological domain" description="Extracellular" evidence="4">
    <location>
        <begin position="194"/>
        <end position="199"/>
    </location>
</feature>
<feature type="transmembrane region" description="Helical; Name=4" evidence="1">
    <location>
        <begin position="200"/>
        <end position="220"/>
    </location>
</feature>
<feature type="topological domain" description="Cytoplasmic" evidence="4">
    <location>
        <begin position="221"/>
        <end position="231"/>
    </location>
</feature>
<feature type="transmembrane region" description="Helical; Name=5" evidence="1">
    <location>
        <begin position="232"/>
        <end position="252"/>
    </location>
</feature>
<feature type="topological domain" description="Extracellular" evidence="4">
    <location>
        <begin position="253"/>
        <end position="258"/>
    </location>
</feature>
<feature type="transmembrane region" description="Helical; Name=6" evidence="1">
    <location>
        <begin position="259"/>
        <end position="279"/>
    </location>
</feature>
<feature type="topological domain" description="Cytoplasmic" evidence="4">
    <location>
        <begin position="280"/>
        <end position="347"/>
    </location>
</feature>
<feature type="transmembrane region" description="Helical; Name=7" evidence="1">
    <location>
        <begin position="348"/>
        <end position="368"/>
    </location>
</feature>
<feature type="topological domain" description="Extracellular" evidence="4">
    <location>
        <begin position="369"/>
        <end position="376"/>
    </location>
</feature>
<feature type="transmembrane region" description="Helical; Name=8" evidence="1">
    <location>
        <begin position="377"/>
        <end position="397"/>
    </location>
</feature>
<feature type="topological domain" description="Cytoplasmic" evidence="4">
    <location>
        <begin position="398"/>
        <end position="405"/>
    </location>
</feature>
<feature type="transmembrane region" description="Helical; Name=9" evidence="1">
    <location>
        <begin position="406"/>
        <end position="426"/>
    </location>
</feature>
<feature type="topological domain" description="Extracellular" evidence="4">
    <location>
        <begin position="427"/>
        <end position="434"/>
    </location>
</feature>
<feature type="transmembrane region" description="Helical; Name=10" evidence="1">
    <location>
        <begin position="435"/>
        <end position="455"/>
    </location>
</feature>
<feature type="topological domain" description="Cytoplasmic" evidence="4">
    <location>
        <begin position="456"/>
        <end position="466"/>
    </location>
</feature>
<feature type="transmembrane region" description="Helical; Name=11" evidence="1">
    <location>
        <begin position="467"/>
        <end position="487"/>
    </location>
</feature>
<feature type="topological domain" description="Extracellular" evidence="4">
    <location>
        <begin position="488"/>
        <end position="491"/>
    </location>
</feature>
<feature type="transmembrane region" description="Helical; Name=12" evidence="1">
    <location>
        <begin position="492"/>
        <end position="512"/>
    </location>
</feature>
<feature type="topological domain" description="Cytoplasmic" evidence="4">
    <location>
        <begin position="513"/>
        <end position="554"/>
    </location>
</feature>
<feature type="glycosylation site" description="N-linked (GlcNAc...) asparagine" evidence="1">
    <location>
        <position position="39"/>
    </location>
</feature>
<feature type="glycosylation site" description="N-linked (GlcNAc...) asparagine" evidence="1">
    <location>
        <position position="194"/>
    </location>
</feature>
<reference evidence="7" key="1">
    <citation type="journal article" date="2010" name="J. Biol. Chem.">
        <title>A novel transporter of SLC22 family specifically transports prostaglandins and co-localizes with 15-hydroxyprostaglandin dehydrogenase in renal proximal tubules.</title>
        <authorList>
            <person name="Shiraya K."/>
            <person name="Hirata T."/>
            <person name="Hatano R."/>
            <person name="Nagamori S."/>
            <person name="Wiriyasermkul P."/>
            <person name="Jutabha P."/>
            <person name="Matsubara M."/>
            <person name="Muto S."/>
            <person name="Tanaka H."/>
            <person name="Asano S."/>
            <person name="Anzai N."/>
            <person name="Endou H."/>
            <person name="Yamada A."/>
            <person name="Sakurai H."/>
            <person name="Kanai Y."/>
        </authorList>
    </citation>
    <scope>NUCLEOTIDE SEQUENCE [MRNA]</scope>
    <scope>FUNCTION</scope>
    <scope>BIOPHYSICOCHEMICAL PROPERTIES</scope>
    <scope>SUBCELLULAR LOCATION</scope>
    <scope>TISSUE SPECIFICITY</scope>
</reference>
<reference evidence="6" key="2">
    <citation type="journal article" date="2005" name="Science">
        <title>The transcriptional landscape of the mammalian genome.</title>
        <authorList>
            <person name="Carninci P."/>
            <person name="Kasukawa T."/>
            <person name="Katayama S."/>
            <person name="Gough J."/>
            <person name="Frith M.C."/>
            <person name="Maeda N."/>
            <person name="Oyama R."/>
            <person name="Ravasi T."/>
            <person name="Lenhard B."/>
            <person name="Wells C."/>
            <person name="Kodzius R."/>
            <person name="Shimokawa K."/>
            <person name="Bajic V.B."/>
            <person name="Brenner S.E."/>
            <person name="Batalov S."/>
            <person name="Forrest A.R."/>
            <person name="Zavolan M."/>
            <person name="Davis M.J."/>
            <person name="Wilming L.G."/>
            <person name="Aidinis V."/>
            <person name="Allen J.E."/>
            <person name="Ambesi-Impiombato A."/>
            <person name="Apweiler R."/>
            <person name="Aturaliya R.N."/>
            <person name="Bailey T.L."/>
            <person name="Bansal M."/>
            <person name="Baxter L."/>
            <person name="Beisel K.W."/>
            <person name="Bersano T."/>
            <person name="Bono H."/>
            <person name="Chalk A.M."/>
            <person name="Chiu K.P."/>
            <person name="Choudhary V."/>
            <person name="Christoffels A."/>
            <person name="Clutterbuck D.R."/>
            <person name="Crowe M.L."/>
            <person name="Dalla E."/>
            <person name="Dalrymple B.P."/>
            <person name="de Bono B."/>
            <person name="Della Gatta G."/>
            <person name="di Bernardo D."/>
            <person name="Down T."/>
            <person name="Engstrom P."/>
            <person name="Fagiolini M."/>
            <person name="Faulkner G."/>
            <person name="Fletcher C.F."/>
            <person name="Fukushima T."/>
            <person name="Furuno M."/>
            <person name="Futaki S."/>
            <person name="Gariboldi M."/>
            <person name="Georgii-Hemming P."/>
            <person name="Gingeras T.R."/>
            <person name="Gojobori T."/>
            <person name="Green R.E."/>
            <person name="Gustincich S."/>
            <person name="Harbers M."/>
            <person name="Hayashi Y."/>
            <person name="Hensch T.K."/>
            <person name="Hirokawa N."/>
            <person name="Hill D."/>
            <person name="Huminiecki L."/>
            <person name="Iacono M."/>
            <person name="Ikeo K."/>
            <person name="Iwama A."/>
            <person name="Ishikawa T."/>
            <person name="Jakt M."/>
            <person name="Kanapin A."/>
            <person name="Katoh M."/>
            <person name="Kawasawa Y."/>
            <person name="Kelso J."/>
            <person name="Kitamura H."/>
            <person name="Kitano H."/>
            <person name="Kollias G."/>
            <person name="Krishnan S.P."/>
            <person name="Kruger A."/>
            <person name="Kummerfeld S.K."/>
            <person name="Kurochkin I.V."/>
            <person name="Lareau L.F."/>
            <person name="Lazarevic D."/>
            <person name="Lipovich L."/>
            <person name="Liu J."/>
            <person name="Liuni S."/>
            <person name="McWilliam S."/>
            <person name="Madan Babu M."/>
            <person name="Madera M."/>
            <person name="Marchionni L."/>
            <person name="Matsuda H."/>
            <person name="Matsuzawa S."/>
            <person name="Miki H."/>
            <person name="Mignone F."/>
            <person name="Miyake S."/>
            <person name="Morris K."/>
            <person name="Mottagui-Tabar S."/>
            <person name="Mulder N."/>
            <person name="Nakano N."/>
            <person name="Nakauchi H."/>
            <person name="Ng P."/>
            <person name="Nilsson R."/>
            <person name="Nishiguchi S."/>
            <person name="Nishikawa S."/>
            <person name="Nori F."/>
            <person name="Ohara O."/>
            <person name="Okazaki Y."/>
            <person name="Orlando V."/>
            <person name="Pang K.C."/>
            <person name="Pavan W.J."/>
            <person name="Pavesi G."/>
            <person name="Pesole G."/>
            <person name="Petrovsky N."/>
            <person name="Piazza S."/>
            <person name="Reed J."/>
            <person name="Reid J.F."/>
            <person name="Ring B.Z."/>
            <person name="Ringwald M."/>
            <person name="Rost B."/>
            <person name="Ruan Y."/>
            <person name="Salzberg S.L."/>
            <person name="Sandelin A."/>
            <person name="Schneider C."/>
            <person name="Schoenbach C."/>
            <person name="Sekiguchi K."/>
            <person name="Semple C.A."/>
            <person name="Seno S."/>
            <person name="Sessa L."/>
            <person name="Sheng Y."/>
            <person name="Shibata Y."/>
            <person name="Shimada H."/>
            <person name="Shimada K."/>
            <person name="Silva D."/>
            <person name="Sinclair B."/>
            <person name="Sperling S."/>
            <person name="Stupka E."/>
            <person name="Sugiura K."/>
            <person name="Sultana R."/>
            <person name="Takenaka Y."/>
            <person name="Taki K."/>
            <person name="Tammoja K."/>
            <person name="Tan S.L."/>
            <person name="Tang S."/>
            <person name="Taylor M.S."/>
            <person name="Tegner J."/>
            <person name="Teichmann S.A."/>
            <person name="Ueda H.R."/>
            <person name="van Nimwegen E."/>
            <person name="Verardo R."/>
            <person name="Wei C.L."/>
            <person name="Yagi K."/>
            <person name="Yamanishi H."/>
            <person name="Zabarovsky E."/>
            <person name="Zhu S."/>
            <person name="Zimmer A."/>
            <person name="Hide W."/>
            <person name="Bult C."/>
            <person name="Grimmond S.M."/>
            <person name="Teasdale R.D."/>
            <person name="Liu E.T."/>
            <person name="Brusic V."/>
            <person name="Quackenbush J."/>
            <person name="Wahlestedt C."/>
            <person name="Mattick J.S."/>
            <person name="Hume D.A."/>
            <person name="Kai C."/>
            <person name="Sasaki D."/>
            <person name="Tomaru Y."/>
            <person name="Fukuda S."/>
            <person name="Kanamori-Katayama M."/>
            <person name="Suzuki M."/>
            <person name="Aoki J."/>
            <person name="Arakawa T."/>
            <person name="Iida J."/>
            <person name="Imamura K."/>
            <person name="Itoh M."/>
            <person name="Kato T."/>
            <person name="Kawaji H."/>
            <person name="Kawagashira N."/>
            <person name="Kawashima T."/>
            <person name="Kojima M."/>
            <person name="Kondo S."/>
            <person name="Konno H."/>
            <person name="Nakano K."/>
            <person name="Ninomiya N."/>
            <person name="Nishio T."/>
            <person name="Okada M."/>
            <person name="Plessy C."/>
            <person name="Shibata K."/>
            <person name="Shiraki T."/>
            <person name="Suzuki S."/>
            <person name="Tagami M."/>
            <person name="Waki K."/>
            <person name="Watahiki A."/>
            <person name="Okamura-Oho Y."/>
            <person name="Suzuki H."/>
            <person name="Kawai J."/>
            <person name="Hayashizaki Y."/>
        </authorList>
    </citation>
    <scope>NUCLEOTIDE SEQUENCE [LARGE SCALE MRNA]</scope>
    <source>
        <strain evidence="6">C57BL/6J</strain>
        <tissue evidence="6">Testis</tissue>
    </source>
</reference>
<reference evidence="10" key="3">
    <citation type="journal article" date="2009" name="PLoS Biol.">
        <title>Lineage-specific biology revealed by a finished genome assembly of the mouse.</title>
        <authorList>
            <person name="Church D.M."/>
            <person name="Goodstadt L."/>
            <person name="Hillier L.W."/>
            <person name="Zody M.C."/>
            <person name="Goldstein S."/>
            <person name="She X."/>
            <person name="Bult C.J."/>
            <person name="Agarwala R."/>
            <person name="Cherry J.L."/>
            <person name="DiCuccio M."/>
            <person name="Hlavina W."/>
            <person name="Kapustin Y."/>
            <person name="Meric P."/>
            <person name="Maglott D."/>
            <person name="Birtle Z."/>
            <person name="Marques A.C."/>
            <person name="Graves T."/>
            <person name="Zhou S."/>
            <person name="Teague B."/>
            <person name="Potamousis K."/>
            <person name="Churas C."/>
            <person name="Place M."/>
            <person name="Herschleb J."/>
            <person name="Runnheim R."/>
            <person name="Forrest D."/>
            <person name="Amos-Landgraf J."/>
            <person name="Schwartz D.C."/>
            <person name="Cheng Z."/>
            <person name="Lindblad-Toh K."/>
            <person name="Eichler E.E."/>
            <person name="Ponting C.P."/>
        </authorList>
    </citation>
    <scope>NUCLEOTIDE SEQUENCE [LARGE SCALE GENOMIC DNA]</scope>
    <source>
        <strain>C57BL/6J</strain>
    </source>
</reference>
<reference evidence="8" key="4">
    <citation type="submission" date="2005-07" db="EMBL/GenBank/DDBJ databases">
        <authorList>
            <person name="Mural R.J."/>
            <person name="Adams M.D."/>
            <person name="Myers E.W."/>
            <person name="Smith H.O."/>
            <person name="Venter J.C."/>
        </authorList>
    </citation>
    <scope>NUCLEOTIDE SEQUENCE [LARGE SCALE GENOMIC DNA]</scope>
</reference>
<reference evidence="5" key="5">
    <citation type="journal article" date="2004" name="Genome Res.">
        <title>The status, quality, and expansion of the NIH full-length cDNA project: the Mammalian Gene Collection (MGC).</title>
        <authorList>
            <consortium name="The MGC Project Team"/>
        </authorList>
    </citation>
    <scope>NUCLEOTIDE SEQUENCE [LARGE SCALE MRNA]</scope>
    <source>
        <strain evidence="5">FVB/N</strain>
        <tissue evidence="5">Kidney</tissue>
    </source>
</reference>
<reference key="6">
    <citation type="journal article" date="2010" name="Cell">
        <title>A tissue-specific atlas of mouse protein phosphorylation and expression.</title>
        <authorList>
            <person name="Huttlin E.L."/>
            <person name="Jedrychowski M.P."/>
            <person name="Elias J.E."/>
            <person name="Goswami T."/>
            <person name="Rad R."/>
            <person name="Beausoleil S.A."/>
            <person name="Villen J."/>
            <person name="Haas W."/>
            <person name="Sowa M.E."/>
            <person name="Gygi S.P."/>
        </authorList>
    </citation>
    <scope>IDENTIFICATION BY MASS SPECTROMETRY [LARGE SCALE ANALYSIS]</scope>
    <source>
        <tissue>Kidney</tissue>
    </source>
</reference>
<name>S22AM_MOUSE</name>
<proteinExistence type="evidence at protein level"/>
<comment type="function">
    <text evidence="2">Sodium-independent organic anion transporter which exhibits high specificity for a subset of prostaglandins including prostaglandin E2 (PGE2), prostaglandin E1 (PGE1), prostaglandin F2-alpha (PGF2-alpha) and prostaglandin D2 (PGD2).</text>
</comment>
<comment type="biophysicochemical properties">
    <kinetics>
        <KM evidence="2">118.3 nM for prostaglandin E2</KM>
        <KM evidence="2">158.2 nM for prostaglandin F2-alpha</KM>
        <KM evidence="2">156.8 nM for prostaglandin E1</KM>
        <KM evidence="2">371.6 nM for prostaglandin D2</KM>
        <Vmax evidence="2">6.32 pmol/min/mg enzyme toward prostaglandin E2</Vmax>
        <Vmax evidence="2">4.61 pmol/min/mg enzyme toward prostaglandin F2-alpha</Vmax>
        <Vmax evidence="2">2.71 pmol/min/mg enzyme toward prostaglandin E1</Vmax>
        <Vmax evidence="2">8.95 pmol/min/mg enzyme toward prostaglandin D2</Vmax>
    </kinetics>
    <temperatureDependence>
        <text evidence="2">High activity at 37 degrees Celsius. Little or no activity at 0 degrees Celsius.</text>
    </temperatureDependence>
</comment>
<comment type="subcellular location">
    <subcellularLocation>
        <location evidence="2">Basolateral cell membrane</location>
        <topology evidence="1">Multi-pass membrane protein</topology>
    </subcellularLocation>
</comment>
<comment type="tissue specificity">
    <text evidence="2">Specifically expressed in kidney where it is found in proximal convoluted tubules (at protein level). Colocalizes with the prostaglandin-inactivating enzyme HPGD in kidney (at protein level). Not detected in other tissues tested.</text>
</comment>
<comment type="similarity">
    <text evidence="4">Belongs to the major facilitator (TC 2.A.1) superfamily. Organic cation transporter (TC 2.A.1.19) family.</text>
</comment>